<name>PSBC_PYRYE</name>
<dbReference type="EMBL" id="AP006715">
    <property type="protein sequence ID" value="BAE92480.1"/>
    <property type="molecule type" value="Genomic_DNA"/>
</dbReference>
<dbReference type="RefSeq" id="YP_537037.3">
    <property type="nucleotide sequence ID" value="NC_007932.1"/>
</dbReference>
<dbReference type="SMR" id="Q1XDD1"/>
<dbReference type="GeneID" id="3978778"/>
<dbReference type="GO" id="GO:0009535">
    <property type="term" value="C:chloroplast thylakoid membrane"/>
    <property type="evidence" value="ECO:0007669"/>
    <property type="project" value="UniProtKB-SubCell"/>
</dbReference>
<dbReference type="GO" id="GO:0009523">
    <property type="term" value="C:photosystem II"/>
    <property type="evidence" value="ECO:0007669"/>
    <property type="project" value="UniProtKB-KW"/>
</dbReference>
<dbReference type="GO" id="GO:0016168">
    <property type="term" value="F:chlorophyll binding"/>
    <property type="evidence" value="ECO:0007669"/>
    <property type="project" value="UniProtKB-UniRule"/>
</dbReference>
<dbReference type="GO" id="GO:0045156">
    <property type="term" value="F:electron transporter, transferring electrons within the cyclic electron transport pathway of photosynthesis activity"/>
    <property type="evidence" value="ECO:0007669"/>
    <property type="project" value="InterPro"/>
</dbReference>
<dbReference type="GO" id="GO:0046872">
    <property type="term" value="F:metal ion binding"/>
    <property type="evidence" value="ECO:0007669"/>
    <property type="project" value="UniProtKB-KW"/>
</dbReference>
<dbReference type="GO" id="GO:0009772">
    <property type="term" value="P:photosynthetic electron transport in photosystem II"/>
    <property type="evidence" value="ECO:0007669"/>
    <property type="project" value="InterPro"/>
</dbReference>
<dbReference type="FunFam" id="1.10.10.670:FF:000001">
    <property type="entry name" value="Photosystem II CP43 reaction center protein"/>
    <property type="match status" value="1"/>
</dbReference>
<dbReference type="Gene3D" id="1.10.10.670">
    <property type="entry name" value="photosystem ii from thermosynechococcus elongatus"/>
    <property type="match status" value="1"/>
</dbReference>
<dbReference type="HAMAP" id="MF_01496">
    <property type="entry name" value="PSII_PsbC_CP43"/>
    <property type="match status" value="1"/>
</dbReference>
<dbReference type="InterPro" id="IPR000932">
    <property type="entry name" value="PS_antenna-like"/>
</dbReference>
<dbReference type="InterPro" id="IPR036001">
    <property type="entry name" value="PS_II_antenna-like_sf"/>
</dbReference>
<dbReference type="InterPro" id="IPR005869">
    <property type="entry name" value="PSII_PsbC"/>
</dbReference>
<dbReference type="InterPro" id="IPR044900">
    <property type="entry name" value="PSII_PsbC_sf"/>
</dbReference>
<dbReference type="NCBIfam" id="TIGR01153">
    <property type="entry name" value="psbC"/>
    <property type="match status" value="1"/>
</dbReference>
<dbReference type="Pfam" id="PF00421">
    <property type="entry name" value="PSII"/>
    <property type="match status" value="1"/>
</dbReference>
<dbReference type="SUPFAM" id="SSF161077">
    <property type="entry name" value="Photosystem II antenna protein-like"/>
    <property type="match status" value="1"/>
</dbReference>
<protein>
    <recommendedName>
        <fullName evidence="1">Photosystem II CP43 reaction center protein</fullName>
    </recommendedName>
    <alternativeName>
        <fullName evidence="1">PSII 43 kDa protein</fullName>
    </alternativeName>
    <alternativeName>
        <fullName evidence="1">Protein CP-43</fullName>
    </alternativeName>
</protein>
<comment type="function">
    <text evidence="1">One of the components of the core complex of photosystem II (PSII). It binds chlorophyll and helps catalyze the primary light-induced photochemical processes of PSII. PSII is a light-driven water:plastoquinone oxidoreductase, using light energy to abstract electrons from H(2)O, generating O(2) and a proton gradient subsequently used for ATP formation.</text>
</comment>
<comment type="cofactor">
    <text evidence="1">Binds multiple chlorophylls and provides some of the ligands for the Ca-4Mn-5O cluster of the oxygen-evolving complex. It may also provide a ligand for a Cl- that is required for oxygen evolution. PSII binds additional chlorophylls, carotenoids and specific lipids.</text>
</comment>
<comment type="subunit">
    <text evidence="1">PSII is composed of 1 copy each of membrane proteins PsbA, PsbB, PsbC, PsbD, PsbE, PsbF, PsbH, PsbI, PsbJ, PsbK, PsbL, PsbM, PsbT, PsbX, PsbY, PsbZ, Psb30/Ycf12, at least 3 peripheral proteins of the oxygen-evolving complex and a large number of cofactors. It forms dimeric complexes.</text>
</comment>
<comment type="subcellular location">
    <subcellularLocation>
        <location evidence="1">Plastid</location>
        <location evidence="1">Chloroplast thylakoid membrane</location>
        <topology evidence="1">Multi-pass membrane protein</topology>
    </subcellularLocation>
</comment>
<comment type="similarity">
    <text evidence="1">Belongs to the PsbB/PsbC family. PsbC subfamily.</text>
</comment>
<keyword id="KW-0148">Chlorophyll</keyword>
<keyword id="KW-0150">Chloroplast</keyword>
<keyword id="KW-0157">Chromophore</keyword>
<keyword id="KW-0464">Manganese</keyword>
<keyword id="KW-0472">Membrane</keyword>
<keyword id="KW-0479">Metal-binding</keyword>
<keyword id="KW-0602">Photosynthesis</keyword>
<keyword id="KW-0604">Photosystem II</keyword>
<keyword id="KW-0934">Plastid</keyword>
<keyword id="KW-0793">Thylakoid</keyword>
<keyword id="KW-0812">Transmembrane</keyword>
<keyword id="KW-1133">Transmembrane helix</keyword>
<sequence>MTKVFALGWLLKINLMKTLYSLRRFYHVETPFNTTVGVGGRDIESTGFAWWSGNARLINVSGKLLGAHVAHAGIMVFWTGAMTLFEVAHFVPEKPLYEQGFILIPHLATLGWGVGPGGEIFNTYPYFVVGVVHLISSAVLGFGGLYHSLIGPDTLEESFPFFGYDWRDKNKMTTILGIHLVLLGIGAFLLVIKALFIGGVYDTWAPGGGDVRFVSNPTLNPLVIFGYVLKSPFGGDGWIVSVNNMEDLVGGHVWIGIICIAGGIWHILTKPFAWARRAFVWSGEAYLSYSLGALSIMGLTASNFVWYNNTAYPSEFYGPTGPEASQAQAFTFLVRDQRLGANVASSQGPTGLGKYLMRSPSGEIIFGGETMRFWDLRAPWVEPLRGPNGLDLNKIKNDIQPWQERRAAEYMTHAPLGSLNSVGGVATEINSVNYVSPRSWLTTSHSFLGFFLFIGHLWHAGRARAAAAGFEKGINRENEPVLSMRPLD</sequence>
<reference key="1">
    <citation type="submission" date="2003-11" db="EMBL/GenBank/DDBJ databases">
        <title>Whole genome sequence of Porphyra yezoensis chloroplast.</title>
        <authorList>
            <person name="Kunimoto M."/>
            <person name="Morishima K."/>
            <person name="Yoshikawa M."/>
            <person name="Fukuda S."/>
            <person name="Kobayashi T."/>
            <person name="Kobayashi M."/>
            <person name="Okazaki T."/>
            <person name="Ohara I."/>
            <person name="Nakayama I."/>
        </authorList>
    </citation>
    <scope>NUCLEOTIDE SEQUENCE [LARGE SCALE GENOMIC DNA]</scope>
    <source>
        <strain>U-51</strain>
    </source>
</reference>
<proteinExistence type="inferred from homology"/>
<feature type="propeptide" id="PRO_0000431226" evidence="1">
    <location>
        <begin position="1"/>
        <end position="29"/>
    </location>
</feature>
<feature type="chain" id="PRO_0000277308" description="Photosystem II CP43 reaction center protein" evidence="1">
    <location>
        <begin position="30"/>
        <end position="488"/>
    </location>
</feature>
<feature type="transmembrane region" description="Helical" evidence="1">
    <location>
        <begin position="84"/>
        <end position="108"/>
    </location>
</feature>
<feature type="transmembrane region" description="Helical" evidence="1">
    <location>
        <begin position="149"/>
        <end position="170"/>
    </location>
</feature>
<feature type="transmembrane region" description="Helical" evidence="1">
    <location>
        <begin position="193"/>
        <end position="215"/>
    </location>
</feature>
<feature type="transmembrane region" description="Helical" evidence="1">
    <location>
        <begin position="270"/>
        <end position="290"/>
    </location>
</feature>
<feature type="transmembrane region" description="Helical" evidence="1">
    <location>
        <begin position="306"/>
        <end position="327"/>
    </location>
</feature>
<feature type="transmembrane region" description="Helical" evidence="1">
    <location>
        <begin position="462"/>
        <end position="486"/>
    </location>
</feature>
<feature type="binding site" evidence="1">
    <location>
        <position position="382"/>
    </location>
    <ligand>
        <name>[CaMn4O5] cluster</name>
        <dbReference type="ChEBI" id="CHEBI:189552"/>
    </ligand>
</feature>
<geneLocation type="chloroplast"/>
<gene>
    <name evidence="1" type="primary">psbC</name>
</gene>
<accession>Q1XDD1</accession>
<evidence type="ECO:0000255" key="1">
    <source>
        <dbReference type="HAMAP-Rule" id="MF_01496"/>
    </source>
</evidence>
<organism>
    <name type="scientific">Pyropia yezoensis</name>
    <name type="common">Susabi-nori</name>
    <name type="synonym">Porphyra yezoensis</name>
    <dbReference type="NCBI Taxonomy" id="2788"/>
    <lineage>
        <taxon>Eukaryota</taxon>
        <taxon>Rhodophyta</taxon>
        <taxon>Bangiophyceae</taxon>
        <taxon>Bangiales</taxon>
        <taxon>Bangiaceae</taxon>
        <taxon>Pyropia</taxon>
    </lineage>
</organism>